<proteinExistence type="inferred from homology"/>
<feature type="chain" id="PRO_1000140733" description="Small ribosomal subunit protein uS4">
    <location>
        <begin position="1"/>
        <end position="206"/>
    </location>
</feature>
<feature type="domain" description="S4 RNA-binding" evidence="1">
    <location>
        <begin position="96"/>
        <end position="156"/>
    </location>
</feature>
<organism>
    <name type="scientific">Erwinia tasmaniensis (strain DSM 17950 / CFBP 7177 / CIP 109463 / NCPPB 4357 / Et1/99)</name>
    <dbReference type="NCBI Taxonomy" id="465817"/>
    <lineage>
        <taxon>Bacteria</taxon>
        <taxon>Pseudomonadati</taxon>
        <taxon>Pseudomonadota</taxon>
        <taxon>Gammaproteobacteria</taxon>
        <taxon>Enterobacterales</taxon>
        <taxon>Erwiniaceae</taxon>
        <taxon>Erwinia</taxon>
    </lineage>
</organism>
<comment type="function">
    <text evidence="1">One of the primary rRNA binding proteins, it binds directly to 16S rRNA where it nucleates assembly of the body of the 30S subunit.</text>
</comment>
<comment type="function">
    <text evidence="1">With S5 and S12 plays an important role in translational accuracy.</text>
</comment>
<comment type="subunit">
    <text evidence="1">Part of the 30S ribosomal subunit. Contacts protein S5. The interaction surface between S4 and S5 is involved in control of translational fidelity.</text>
</comment>
<comment type="similarity">
    <text evidence="1">Belongs to the universal ribosomal protein uS4 family.</text>
</comment>
<name>RS4_ERWT9</name>
<evidence type="ECO:0000255" key="1">
    <source>
        <dbReference type="HAMAP-Rule" id="MF_01306"/>
    </source>
</evidence>
<evidence type="ECO:0000305" key="2"/>
<gene>
    <name evidence="1" type="primary">rpsD</name>
    <name type="ordered locus">ETA_31390</name>
</gene>
<dbReference type="EMBL" id="CU468135">
    <property type="protein sequence ID" value="CAO98185.1"/>
    <property type="molecule type" value="Genomic_DNA"/>
</dbReference>
<dbReference type="RefSeq" id="WP_012442832.1">
    <property type="nucleotide sequence ID" value="NC_010694.1"/>
</dbReference>
<dbReference type="SMR" id="B2VK72"/>
<dbReference type="STRING" id="465817.ETA_31390"/>
<dbReference type="GeneID" id="90514049"/>
<dbReference type="KEGG" id="eta:ETA_31390"/>
<dbReference type="eggNOG" id="COG0522">
    <property type="taxonomic scope" value="Bacteria"/>
</dbReference>
<dbReference type="HOGENOM" id="CLU_092403_0_2_6"/>
<dbReference type="OrthoDB" id="9803672at2"/>
<dbReference type="Proteomes" id="UP000001726">
    <property type="component" value="Chromosome"/>
</dbReference>
<dbReference type="GO" id="GO:0015935">
    <property type="term" value="C:small ribosomal subunit"/>
    <property type="evidence" value="ECO:0007669"/>
    <property type="project" value="InterPro"/>
</dbReference>
<dbReference type="GO" id="GO:0019843">
    <property type="term" value="F:rRNA binding"/>
    <property type="evidence" value="ECO:0007669"/>
    <property type="project" value="UniProtKB-UniRule"/>
</dbReference>
<dbReference type="GO" id="GO:0003735">
    <property type="term" value="F:structural constituent of ribosome"/>
    <property type="evidence" value="ECO:0007669"/>
    <property type="project" value="InterPro"/>
</dbReference>
<dbReference type="GO" id="GO:0042274">
    <property type="term" value="P:ribosomal small subunit biogenesis"/>
    <property type="evidence" value="ECO:0007669"/>
    <property type="project" value="TreeGrafter"/>
</dbReference>
<dbReference type="GO" id="GO:0006412">
    <property type="term" value="P:translation"/>
    <property type="evidence" value="ECO:0007669"/>
    <property type="project" value="UniProtKB-UniRule"/>
</dbReference>
<dbReference type="CDD" id="cd00165">
    <property type="entry name" value="S4"/>
    <property type="match status" value="1"/>
</dbReference>
<dbReference type="FunFam" id="1.10.1050.10:FF:000001">
    <property type="entry name" value="30S ribosomal protein S4"/>
    <property type="match status" value="1"/>
</dbReference>
<dbReference type="FunFam" id="3.10.290.10:FF:000001">
    <property type="entry name" value="30S ribosomal protein S4"/>
    <property type="match status" value="1"/>
</dbReference>
<dbReference type="Gene3D" id="1.10.1050.10">
    <property type="entry name" value="Ribosomal Protein S4 Delta 41, Chain A, domain 1"/>
    <property type="match status" value="1"/>
</dbReference>
<dbReference type="Gene3D" id="3.10.290.10">
    <property type="entry name" value="RNA-binding S4 domain"/>
    <property type="match status" value="1"/>
</dbReference>
<dbReference type="HAMAP" id="MF_01306_B">
    <property type="entry name" value="Ribosomal_uS4_B"/>
    <property type="match status" value="1"/>
</dbReference>
<dbReference type="InterPro" id="IPR022801">
    <property type="entry name" value="Ribosomal_uS4"/>
</dbReference>
<dbReference type="InterPro" id="IPR005709">
    <property type="entry name" value="Ribosomal_uS4_bac-type"/>
</dbReference>
<dbReference type="InterPro" id="IPR018079">
    <property type="entry name" value="Ribosomal_uS4_CS"/>
</dbReference>
<dbReference type="InterPro" id="IPR001912">
    <property type="entry name" value="Ribosomal_uS4_N"/>
</dbReference>
<dbReference type="InterPro" id="IPR002942">
    <property type="entry name" value="S4_RNA-bd"/>
</dbReference>
<dbReference type="InterPro" id="IPR036986">
    <property type="entry name" value="S4_RNA-bd_sf"/>
</dbReference>
<dbReference type="NCBIfam" id="NF003717">
    <property type="entry name" value="PRK05327.1"/>
    <property type="match status" value="1"/>
</dbReference>
<dbReference type="NCBIfam" id="TIGR01017">
    <property type="entry name" value="rpsD_bact"/>
    <property type="match status" value="1"/>
</dbReference>
<dbReference type="PANTHER" id="PTHR11831">
    <property type="entry name" value="30S 40S RIBOSOMAL PROTEIN"/>
    <property type="match status" value="1"/>
</dbReference>
<dbReference type="PANTHER" id="PTHR11831:SF4">
    <property type="entry name" value="SMALL RIBOSOMAL SUBUNIT PROTEIN US4M"/>
    <property type="match status" value="1"/>
</dbReference>
<dbReference type="Pfam" id="PF00163">
    <property type="entry name" value="Ribosomal_S4"/>
    <property type="match status" value="1"/>
</dbReference>
<dbReference type="Pfam" id="PF01479">
    <property type="entry name" value="S4"/>
    <property type="match status" value="1"/>
</dbReference>
<dbReference type="SMART" id="SM01390">
    <property type="entry name" value="Ribosomal_S4"/>
    <property type="match status" value="1"/>
</dbReference>
<dbReference type="SMART" id="SM00363">
    <property type="entry name" value="S4"/>
    <property type="match status" value="1"/>
</dbReference>
<dbReference type="SUPFAM" id="SSF55174">
    <property type="entry name" value="Alpha-L RNA-binding motif"/>
    <property type="match status" value="1"/>
</dbReference>
<dbReference type="PROSITE" id="PS00632">
    <property type="entry name" value="RIBOSOMAL_S4"/>
    <property type="match status" value="1"/>
</dbReference>
<dbReference type="PROSITE" id="PS50889">
    <property type="entry name" value="S4"/>
    <property type="match status" value="1"/>
</dbReference>
<reference key="1">
    <citation type="journal article" date="2008" name="Environ. Microbiol.">
        <title>The genome of Erwinia tasmaniensis strain Et1/99, a non-pathogenic bacterium in the genus Erwinia.</title>
        <authorList>
            <person name="Kube M."/>
            <person name="Migdoll A.M."/>
            <person name="Mueller I."/>
            <person name="Kuhl H."/>
            <person name="Beck A."/>
            <person name="Reinhardt R."/>
            <person name="Geider K."/>
        </authorList>
    </citation>
    <scope>NUCLEOTIDE SEQUENCE [LARGE SCALE GENOMIC DNA]</scope>
    <source>
        <strain>DSM 17950 / CFBP 7177 / CIP 109463 / NCPPB 4357 / Et1/99</strain>
    </source>
</reference>
<sequence>MARYLGPKLKLSRREGTDLFLKSGVRAIDTKCKIEQAPGQHGARKPRLSDYGVQLREKQKVRRTYGVLERQFRNYYKEAARLKGNTGENLLALLEGRLDNVVYRMGFGATRAESRQLVSHKSIMVNGRVVSIASYQVTPNDVVSIREKAKKQSRVKAALELAEQREKPTWLEVDATKMEGVFKRIPERTDLSADINEHLIVELYSK</sequence>
<keyword id="KW-1185">Reference proteome</keyword>
<keyword id="KW-0687">Ribonucleoprotein</keyword>
<keyword id="KW-0689">Ribosomal protein</keyword>
<keyword id="KW-0694">RNA-binding</keyword>
<keyword id="KW-0699">rRNA-binding</keyword>
<accession>B2VK72</accession>
<protein>
    <recommendedName>
        <fullName evidence="1">Small ribosomal subunit protein uS4</fullName>
    </recommendedName>
    <alternativeName>
        <fullName evidence="2">30S ribosomal protein S4</fullName>
    </alternativeName>
</protein>